<evidence type="ECO:0000255" key="1"/>
<evidence type="ECO:0000269" key="2">
    <source>
    </source>
</evidence>
<evidence type="ECO:0000269" key="3">
    <source>
    </source>
</evidence>
<evidence type="ECO:0000305" key="4"/>
<name>CECD_GALME</name>
<keyword id="KW-0044">Antibiotic</keyword>
<keyword id="KW-0929">Antimicrobial</keyword>
<keyword id="KW-0903">Direct protein sequencing</keyword>
<keyword id="KW-0295">Fungicide</keyword>
<keyword id="KW-0391">Immunity</keyword>
<keyword id="KW-0399">Innate immunity</keyword>
<keyword id="KW-1185">Reference proteome</keyword>
<keyword id="KW-0964">Secreted</keyword>
<reference evidence="4" key="1">
    <citation type="journal article" date="2001" name="Acta Biochim. Pol.">
        <title>Antibacterial peptides of the moth Galleria mellonella.</title>
        <authorList>
            <person name="Mak P."/>
            <person name="Chmiel D."/>
            <person name="Gacek G.J."/>
        </authorList>
    </citation>
    <scope>PROTEIN SEQUENCE</scope>
    <scope>SUBCELLULAR LOCATION</scope>
    <scope>TISSUE SPECIFICITY</scope>
    <scope>INDUCTION</scope>
    <scope>MASS SPECTROMETRY</scope>
    <source>
        <tissue evidence="2">Larval hemolymph</tissue>
    </source>
</reference>
<reference evidence="4" key="2">
    <citation type="journal article" date="2007" name="Peptides">
        <title>Purification and characterization of eight peptides from Galleria mellonella immune hemolymph.</title>
        <authorList>
            <person name="Cytrynska M."/>
            <person name="Mak P."/>
            <person name="Zdybicka-Barabas A."/>
            <person name="Suder P."/>
            <person name="Jakubowicz T."/>
        </authorList>
    </citation>
    <scope>PROTEIN SEQUENCE</scope>
    <scope>FUNCTION</scope>
    <scope>SUBCELLULAR LOCATION</scope>
    <scope>TISSUE SPECIFICITY</scope>
    <scope>INDUCTION</scope>
    <scope>MASS SPECTROMETRY</scope>
    <source>
        <tissue evidence="3">Larval hemolymph</tissue>
    </source>
</reference>
<protein>
    <recommendedName>
        <fullName>Cecropin-D-like peptide</fullName>
    </recommendedName>
</protein>
<organism>
    <name type="scientific">Galleria mellonella</name>
    <name type="common">Greater wax moth</name>
    <dbReference type="NCBI Taxonomy" id="7137"/>
    <lineage>
        <taxon>Eukaryota</taxon>
        <taxon>Metazoa</taxon>
        <taxon>Ecdysozoa</taxon>
        <taxon>Arthropoda</taxon>
        <taxon>Hexapoda</taxon>
        <taxon>Insecta</taxon>
        <taxon>Pterygota</taxon>
        <taxon>Neoptera</taxon>
        <taxon>Endopterygota</taxon>
        <taxon>Lepidoptera</taxon>
        <taxon>Glossata</taxon>
        <taxon>Ditrysia</taxon>
        <taxon>Pyraloidea</taxon>
        <taxon>Pyralidae</taxon>
        <taxon>Galleriinae</taxon>
        <taxon>Galleria</taxon>
    </lineage>
</organism>
<dbReference type="SMR" id="P85210"/>
<dbReference type="InParanoid" id="P85210"/>
<dbReference type="Proteomes" id="UP000504614">
    <property type="component" value="Unplaced"/>
</dbReference>
<dbReference type="GO" id="GO:0005615">
    <property type="term" value="C:extracellular space"/>
    <property type="evidence" value="ECO:0000314"/>
    <property type="project" value="UniProtKB"/>
</dbReference>
<dbReference type="GO" id="GO:0019731">
    <property type="term" value="P:antibacterial humoral response"/>
    <property type="evidence" value="ECO:0007669"/>
    <property type="project" value="InterPro"/>
</dbReference>
<dbReference type="GO" id="GO:0050832">
    <property type="term" value="P:defense response to fungus"/>
    <property type="evidence" value="ECO:0000314"/>
    <property type="project" value="UniProtKB"/>
</dbReference>
<dbReference type="GO" id="GO:0050829">
    <property type="term" value="P:defense response to Gram-negative bacterium"/>
    <property type="evidence" value="ECO:0000314"/>
    <property type="project" value="UniProtKB"/>
</dbReference>
<dbReference type="GO" id="GO:0050830">
    <property type="term" value="P:defense response to Gram-positive bacterium"/>
    <property type="evidence" value="ECO:0000314"/>
    <property type="project" value="UniProtKB"/>
</dbReference>
<dbReference type="GO" id="GO:0045087">
    <property type="term" value="P:innate immune response"/>
    <property type="evidence" value="ECO:0000314"/>
    <property type="project" value="UniProtKB"/>
</dbReference>
<dbReference type="GO" id="GO:0031640">
    <property type="term" value="P:killing of cells of another organism"/>
    <property type="evidence" value="ECO:0007669"/>
    <property type="project" value="UniProtKB-KW"/>
</dbReference>
<dbReference type="InterPro" id="IPR000875">
    <property type="entry name" value="Cecropin"/>
</dbReference>
<dbReference type="Pfam" id="PF00272">
    <property type="entry name" value="Cecropin"/>
    <property type="match status" value="1"/>
</dbReference>
<sequence>ENFFKEIERAGQRIRDAIISAAPAVETLAQAQKIIKGGD</sequence>
<comment type="function">
    <text evidence="3">Cecropins have lytic and antibacterial activity against several Gram-positive and Gram-negative bacteria. Has antibacterial activity against the Gram-positive bacteria M.luteus (MIC=34.4 uM), L.monocytogenes (MIC=34.4 uM), and S.lutea (MIC=34.4 uM), and the Gram-negative bacterium E.coli D31 (MIC=8.6 uM). Lacks antibacterial activity against the Gram-positive bacterium B.circulans, and the Gram-negative bacteria E.coli ATCC 25922 and S.typhimurium. Has antifungal activity against A.niger, but lacks antifungal activity against C.albicans, C.wickerhamii, F.oxysporum, P.pastoris, P.tannophilus, S.cerevisiae, T.harzianum, and Z.marxianus.</text>
</comment>
<comment type="subcellular location">
    <subcellularLocation>
        <location evidence="2 3">Secreted</location>
    </subcellularLocation>
</comment>
<comment type="tissue specificity">
    <text evidence="2 3">Hemolymph.</text>
</comment>
<comment type="induction">
    <text evidence="2 3">By bacterial infection.</text>
</comment>
<comment type="mass spectrometry"/>
<comment type="similarity">
    <text evidence="1">Belongs to the cecropin family.</text>
</comment>
<proteinExistence type="evidence at protein level"/>
<accession>P85210</accession>
<feature type="peptide" id="PRO_0000298770" description="Cecropin-D-like peptide">
    <location>
        <begin position="1"/>
        <end position="39"/>
    </location>
</feature>